<gene>
    <name evidence="1" type="primary">pstB</name>
</gene>
<comment type="function">
    <text evidence="1">Part of the ABC transporter complex PstSACB involved in phosphate import. Responsible for energy coupling to the transport system.</text>
</comment>
<comment type="catalytic activity">
    <reaction evidence="1">
        <text>phosphate(out) + ATP + H2O = ADP + 2 phosphate(in) + H(+)</text>
        <dbReference type="Rhea" id="RHEA:24440"/>
        <dbReference type="ChEBI" id="CHEBI:15377"/>
        <dbReference type="ChEBI" id="CHEBI:15378"/>
        <dbReference type="ChEBI" id="CHEBI:30616"/>
        <dbReference type="ChEBI" id="CHEBI:43474"/>
        <dbReference type="ChEBI" id="CHEBI:456216"/>
        <dbReference type="EC" id="7.3.2.1"/>
    </reaction>
</comment>
<comment type="subunit">
    <text evidence="1">The complex is composed of two ATP-binding proteins (PstB), two transmembrane proteins (PstC and PstA) and a solute-binding protein (PstS).</text>
</comment>
<comment type="subcellular location">
    <subcellularLocation>
        <location evidence="1">Cell inner membrane</location>
        <topology evidence="1">Peripheral membrane protein</topology>
    </subcellularLocation>
</comment>
<comment type="similarity">
    <text evidence="1">Belongs to the ABC transporter superfamily. Phosphate importer (TC 3.A.1.7) family.</text>
</comment>
<name>PSTB_BURSP</name>
<reference key="1">
    <citation type="journal article" date="1999" name="J. Bacteriol.">
        <title>Identification of a putative P-transporter operon in the genome of a Burkholderia strain living inside the arbuscular mycorrhizal fungus Gigaspora margarita.</title>
        <authorList>
            <person name="Ruiz-Lozano J."/>
            <person name="Bonfante P."/>
        </authorList>
    </citation>
    <scope>NUCLEOTIDE SEQUENCE [GENOMIC DNA]</scope>
</reference>
<accession>Q9XBG1</accession>
<organism>
    <name type="scientific">Burkholderia sp</name>
    <dbReference type="NCBI Taxonomy" id="36773"/>
    <lineage>
        <taxon>Bacteria</taxon>
        <taxon>Pseudomonadati</taxon>
        <taxon>Pseudomonadota</taxon>
        <taxon>Betaproteobacteria</taxon>
        <taxon>Burkholderiales</taxon>
        <taxon>Burkholderiaceae</taxon>
        <taxon>Burkholderia</taxon>
    </lineage>
</organism>
<keyword id="KW-0067">ATP-binding</keyword>
<keyword id="KW-0997">Cell inner membrane</keyword>
<keyword id="KW-1003">Cell membrane</keyword>
<keyword id="KW-0472">Membrane</keyword>
<keyword id="KW-0547">Nucleotide-binding</keyword>
<keyword id="KW-0592">Phosphate transport</keyword>
<keyword id="KW-1278">Translocase</keyword>
<keyword id="KW-0813">Transport</keyword>
<dbReference type="EC" id="7.3.2.1" evidence="1"/>
<dbReference type="EMBL" id="AJ132617">
    <property type="protein sequence ID" value="CAB41942.1"/>
    <property type="molecule type" value="Genomic_DNA"/>
</dbReference>
<dbReference type="SMR" id="Q9XBG1"/>
<dbReference type="GO" id="GO:0005886">
    <property type="term" value="C:plasma membrane"/>
    <property type="evidence" value="ECO:0007669"/>
    <property type="project" value="UniProtKB-SubCell"/>
</dbReference>
<dbReference type="GO" id="GO:0005524">
    <property type="term" value="F:ATP binding"/>
    <property type="evidence" value="ECO:0007669"/>
    <property type="project" value="UniProtKB-KW"/>
</dbReference>
<dbReference type="GO" id="GO:0016887">
    <property type="term" value="F:ATP hydrolysis activity"/>
    <property type="evidence" value="ECO:0007669"/>
    <property type="project" value="InterPro"/>
</dbReference>
<dbReference type="GO" id="GO:0015415">
    <property type="term" value="F:ATPase-coupled phosphate ion transmembrane transporter activity"/>
    <property type="evidence" value="ECO:0007669"/>
    <property type="project" value="UniProtKB-EC"/>
</dbReference>
<dbReference type="GO" id="GO:0035435">
    <property type="term" value="P:phosphate ion transmembrane transport"/>
    <property type="evidence" value="ECO:0007669"/>
    <property type="project" value="InterPro"/>
</dbReference>
<dbReference type="CDD" id="cd03260">
    <property type="entry name" value="ABC_PstB_phosphate_transporter"/>
    <property type="match status" value="1"/>
</dbReference>
<dbReference type="FunFam" id="3.40.50.300:FF:000132">
    <property type="entry name" value="Phosphate import ATP-binding protein PstB"/>
    <property type="match status" value="1"/>
</dbReference>
<dbReference type="Gene3D" id="3.40.50.300">
    <property type="entry name" value="P-loop containing nucleotide triphosphate hydrolases"/>
    <property type="match status" value="1"/>
</dbReference>
<dbReference type="InterPro" id="IPR003593">
    <property type="entry name" value="AAA+_ATPase"/>
</dbReference>
<dbReference type="InterPro" id="IPR003439">
    <property type="entry name" value="ABC_transporter-like_ATP-bd"/>
</dbReference>
<dbReference type="InterPro" id="IPR017871">
    <property type="entry name" value="ABC_transporter-like_CS"/>
</dbReference>
<dbReference type="InterPro" id="IPR027417">
    <property type="entry name" value="P-loop_NTPase"/>
</dbReference>
<dbReference type="InterPro" id="IPR005670">
    <property type="entry name" value="PstB-like"/>
</dbReference>
<dbReference type="NCBIfam" id="TIGR00972">
    <property type="entry name" value="3a0107s01c2"/>
    <property type="match status" value="1"/>
</dbReference>
<dbReference type="PANTHER" id="PTHR43423">
    <property type="entry name" value="ABC TRANSPORTER I FAMILY MEMBER 17"/>
    <property type="match status" value="1"/>
</dbReference>
<dbReference type="PANTHER" id="PTHR43423:SF3">
    <property type="entry name" value="PHOSPHATE IMPORT ATP-BINDING PROTEIN PSTB"/>
    <property type="match status" value="1"/>
</dbReference>
<dbReference type="Pfam" id="PF00005">
    <property type="entry name" value="ABC_tran"/>
    <property type="match status" value="1"/>
</dbReference>
<dbReference type="SMART" id="SM00382">
    <property type="entry name" value="AAA"/>
    <property type="match status" value="1"/>
</dbReference>
<dbReference type="SUPFAM" id="SSF52540">
    <property type="entry name" value="P-loop containing nucleoside triphosphate hydrolases"/>
    <property type="match status" value="1"/>
</dbReference>
<dbReference type="PROSITE" id="PS00211">
    <property type="entry name" value="ABC_TRANSPORTER_1"/>
    <property type="match status" value="1"/>
</dbReference>
<dbReference type="PROSITE" id="PS50893">
    <property type="entry name" value="ABC_TRANSPORTER_2"/>
    <property type="match status" value="1"/>
</dbReference>
<dbReference type="PROSITE" id="PS51238">
    <property type="entry name" value="PSTB"/>
    <property type="match status" value="1"/>
</dbReference>
<sequence length="261" mass="29558">MRAQDHAISSVKAKLQVRRLNFYYGRTQALKNIELSIPERKITAFIGPSGCGKSTLLRTFNKMYTLYPEQRAEGEIWMDGENLLDPKQDIALLRARIGMVFQKPTPFPMSVYDNIAFGMKLFERLSGAEMDARVDGRRHPGPLWNEVKNTLRQSGICLSGGQQQRLCIARAIAIRPEVLLLDEPCSALDPISTGRIEELISELGHEYTVVIVTHNLQQAARCSDYTAYLYLGELVEFGETQQLFMKPAHQETENYITGRFG</sequence>
<protein>
    <recommendedName>
        <fullName evidence="1">Phosphate import ATP-binding protein PstB</fullName>
        <ecNumber evidence="1">7.3.2.1</ecNumber>
    </recommendedName>
    <alternativeName>
        <fullName evidence="1">ABC phosphate transporter</fullName>
    </alternativeName>
    <alternativeName>
        <fullName evidence="1">Phosphate-transporting ATPase</fullName>
    </alternativeName>
</protein>
<proteinExistence type="inferred from homology"/>
<evidence type="ECO:0000255" key="1">
    <source>
        <dbReference type="HAMAP-Rule" id="MF_01702"/>
    </source>
</evidence>
<feature type="chain" id="PRO_0000092797" description="Phosphate import ATP-binding protein PstB">
    <location>
        <begin position="1"/>
        <end position="261"/>
    </location>
</feature>
<feature type="domain" description="ABC transporter" evidence="1">
    <location>
        <begin position="15"/>
        <end position="256"/>
    </location>
</feature>
<feature type="binding site" evidence="1">
    <location>
        <begin position="47"/>
        <end position="54"/>
    </location>
    <ligand>
        <name>ATP</name>
        <dbReference type="ChEBI" id="CHEBI:30616"/>
    </ligand>
</feature>